<name>PURA_HUMAN</name>
<organism>
    <name type="scientific">Homo sapiens</name>
    <name type="common">Human</name>
    <dbReference type="NCBI Taxonomy" id="9606"/>
    <lineage>
        <taxon>Eukaryota</taxon>
        <taxon>Metazoa</taxon>
        <taxon>Chordata</taxon>
        <taxon>Craniata</taxon>
        <taxon>Vertebrata</taxon>
        <taxon>Euteleostomi</taxon>
        <taxon>Mammalia</taxon>
        <taxon>Eutheria</taxon>
        <taxon>Euarchontoglires</taxon>
        <taxon>Primates</taxon>
        <taxon>Haplorrhini</taxon>
        <taxon>Catarrhini</taxon>
        <taxon>Hominidae</taxon>
        <taxon>Homo</taxon>
    </lineage>
</organism>
<protein>
    <recommendedName>
        <fullName>Transcriptional activator protein Pur-alpha</fullName>
    </recommendedName>
    <alternativeName>
        <fullName>Purine-rich single-stranded DNA-binding protein alpha</fullName>
    </alternativeName>
</protein>
<proteinExistence type="evidence at protein level"/>
<feature type="initiator methionine" description="Removed" evidence="9 10">
    <location>
        <position position="1"/>
    </location>
</feature>
<feature type="chain" id="PRO_0000097107" description="Transcriptional activator protein Pur-alpha">
    <location>
        <begin position="2"/>
        <end position="322"/>
    </location>
</feature>
<feature type="repeat" description="PUR repeat I" evidence="8">
    <location>
        <begin position="60"/>
        <end position="125"/>
    </location>
</feature>
<feature type="repeat" description="PUR repeat II" evidence="8">
    <location>
        <begin position="142"/>
        <end position="213"/>
    </location>
</feature>
<feature type="repeat" description="PUR repeat III" evidence="8">
    <location>
        <begin position="215"/>
        <end position="281"/>
    </location>
</feature>
<feature type="region of interest" description="Disordered" evidence="2">
    <location>
        <begin position="1"/>
        <end position="55"/>
    </location>
</feature>
<feature type="region of interest" description="Disordered" evidence="2">
    <location>
        <begin position="295"/>
        <end position="322"/>
    </location>
</feature>
<feature type="compositionally biased region" description="Gly residues" evidence="2">
    <location>
        <begin position="9"/>
        <end position="52"/>
    </location>
</feature>
<feature type="compositionally biased region" description="Low complexity" evidence="2">
    <location>
        <begin position="295"/>
        <end position="314"/>
    </location>
</feature>
<feature type="modified residue" description="N-acetylalanine" evidence="9 10">
    <location>
        <position position="2"/>
    </location>
</feature>
<feature type="modified residue" description="Phosphoserine" evidence="11">
    <location>
        <position position="182"/>
    </location>
</feature>
<feature type="sequence variant" id="VAR_072698" description="In NEDRIHF." evidence="6">
    <original>IA</original>
    <variation>T</variation>
    <location>
        <begin position="88"/>
        <end position="89"/>
    </location>
</feature>
<feature type="sequence variant" id="VAR_072699" description="In NEDRIHF; dbSNP:rs587782999." evidence="6">
    <original>A</original>
    <variation>P</variation>
    <location>
        <position position="89"/>
    </location>
</feature>
<feature type="sequence variant" id="VAR_072700" description="In NEDRIHF; dbSNP:rs587782994." evidence="6">
    <original>K</original>
    <variation>E</variation>
    <location>
        <position position="97"/>
    </location>
</feature>
<feature type="sequence variant" id="VAR_072701" description="In NEDRIHF; dbSNP:rs587782995." evidence="6">
    <original>L</original>
    <variation>P</variation>
    <location>
        <position position="100"/>
    </location>
</feature>
<feature type="sequence variant" id="VAR_072702" description="In NEDRIHF; dbSNP:rs587782998." evidence="6">
    <original>M</original>
    <variation>K</variation>
    <location>
        <position position="157"/>
    </location>
</feature>
<feature type="sequence variant" id="VAR_072703" description="In NEDRIHF; dbSNP:rs587783001." evidence="6">
    <original>R</original>
    <variation>P</variation>
    <location>
        <position position="199"/>
    </location>
</feature>
<feature type="sequence variant" id="VAR_073993" description="In NEDRIHF; dbSNP:rs786204834." evidence="5">
    <original>I</original>
    <variation>F</variation>
    <location>
        <position position="206"/>
    </location>
</feature>
<feature type="sequence variant" id="VAR_073994" description="In NEDRIHF." evidence="5">
    <location>
        <position position="233"/>
    </location>
</feature>
<feature type="sequence variant" id="VAR_072704" description="In NEDRIHF." evidence="6">
    <location>
        <position position="271"/>
    </location>
</feature>
<feature type="strand" evidence="12">
    <location>
        <begin position="59"/>
        <end position="68"/>
    </location>
</feature>
<feature type="strand" evidence="12">
    <location>
        <begin position="71"/>
        <end position="80"/>
    </location>
</feature>
<feature type="strand" evidence="12">
    <location>
        <begin position="83"/>
        <end position="91"/>
    </location>
</feature>
<feature type="strand" evidence="12">
    <location>
        <begin position="93"/>
        <end position="103"/>
    </location>
</feature>
<feature type="helix" evidence="12">
    <location>
        <begin position="104"/>
        <end position="122"/>
    </location>
</feature>
<feature type="strand" evidence="12">
    <location>
        <begin position="143"/>
        <end position="150"/>
    </location>
</feature>
<feature type="strand" evidence="12">
    <location>
        <begin position="153"/>
        <end position="162"/>
    </location>
</feature>
<feature type="strand" evidence="12">
    <location>
        <begin position="165"/>
        <end position="177"/>
    </location>
</feature>
<feature type="strand" evidence="12">
    <location>
        <begin position="187"/>
        <end position="191"/>
    </location>
</feature>
<feature type="helix" evidence="12">
    <location>
        <begin position="192"/>
        <end position="194"/>
    </location>
</feature>
<feature type="helix" evidence="12">
    <location>
        <begin position="195"/>
        <end position="209"/>
    </location>
</feature>
<feature type="strand" evidence="13">
    <location>
        <begin position="222"/>
        <end position="226"/>
    </location>
</feature>
<feature type="strand" evidence="13">
    <location>
        <begin position="229"/>
        <end position="238"/>
    </location>
</feature>
<feature type="strand" evidence="13">
    <location>
        <begin position="241"/>
        <end position="250"/>
    </location>
</feature>
<feature type="strand" evidence="13">
    <location>
        <begin position="253"/>
        <end position="260"/>
    </location>
</feature>
<feature type="helix" evidence="13">
    <location>
        <begin position="261"/>
        <end position="263"/>
    </location>
</feature>
<feature type="helix" evidence="13">
    <location>
        <begin position="264"/>
        <end position="277"/>
    </location>
</feature>
<gene>
    <name type="primary">PURA</name>
    <name type="synonym">PUR1</name>
</gene>
<keyword id="KW-0002">3D-structure</keyword>
<keyword id="KW-0007">Acetylation</keyword>
<keyword id="KW-0010">Activator</keyword>
<keyword id="KW-0225">Disease variant</keyword>
<keyword id="KW-0238">DNA-binding</keyword>
<keyword id="KW-0991">Intellectual disability</keyword>
<keyword id="KW-0539">Nucleus</keyword>
<keyword id="KW-0597">Phosphoprotein</keyword>
<keyword id="KW-1267">Proteomics identification</keyword>
<keyword id="KW-1185">Reference proteome</keyword>
<keyword id="KW-0677">Repeat</keyword>
<keyword id="KW-0804">Transcription</keyword>
<keyword id="KW-0805">Transcription regulation</keyword>
<accession>Q00577</accession>
<reference key="1">
    <citation type="journal article" date="1992" name="Mol. Cell. Biol.">
        <title>Sequence of cDNA comprising the human pur gene and sequence-specific single-stranded-DNA-binding properties of the encoded protein.</title>
        <authorList>
            <person name="Bergemann A.D."/>
            <person name="Ma Z.-W."/>
            <person name="Johnson E.M."/>
        </authorList>
    </citation>
    <scope>NUCLEOTIDE SEQUENCE [MRNA]</scope>
    <scope>SSDNA-BINDING</scope>
    <source>
        <tissue>Fetal liver</tissue>
    </source>
</reference>
<reference key="2">
    <citation type="journal article" date="2006" name="Cell">
        <title>Global, in vivo, and site-specific phosphorylation dynamics in signaling networks.</title>
        <authorList>
            <person name="Olsen J.V."/>
            <person name="Blagoev B."/>
            <person name="Gnad F."/>
            <person name="Macek B."/>
            <person name="Kumar C."/>
            <person name="Mortensen P."/>
            <person name="Mann M."/>
        </authorList>
    </citation>
    <scope>IDENTIFICATION BY MASS SPECTROMETRY [LARGE SCALE ANALYSIS]</scope>
    <source>
        <tissue>Cervix carcinoma</tissue>
    </source>
</reference>
<reference key="3">
    <citation type="journal article" date="2009" name="Sci. Signal.">
        <title>Quantitative phosphoproteomic analysis of T cell receptor signaling reveals system-wide modulation of protein-protein interactions.</title>
        <authorList>
            <person name="Mayya V."/>
            <person name="Lundgren D.H."/>
            <person name="Hwang S.-I."/>
            <person name="Rezaul K."/>
            <person name="Wu L."/>
            <person name="Eng J.K."/>
            <person name="Rodionov V."/>
            <person name="Han D.K."/>
        </authorList>
    </citation>
    <scope>IDENTIFICATION BY MASS SPECTROMETRY [LARGE SCALE ANALYSIS]</scope>
    <source>
        <tissue>Leukemic T-cell</tissue>
    </source>
</reference>
<reference key="4">
    <citation type="journal article" date="2010" name="PLoS ONE">
        <title>Of bits and bugs--on the use of bioinformatics and a bacterial crystal structure to solve a eukaryotic repeat-protein structure.</title>
        <authorList>
            <person name="Graebsch A."/>
            <person name="Roche S."/>
            <person name="Kostrewa D."/>
            <person name="Soding J."/>
            <person name="Niessing D."/>
        </authorList>
    </citation>
    <scope>SSDNA-BINDING</scope>
    <scope>REPEATS</scope>
</reference>
<reference key="5">
    <citation type="journal article" date="2010" name="Sci. Signal.">
        <title>Quantitative phosphoproteomics reveals widespread full phosphorylation site occupancy during mitosis.</title>
        <authorList>
            <person name="Olsen J.V."/>
            <person name="Vermeulen M."/>
            <person name="Santamaria A."/>
            <person name="Kumar C."/>
            <person name="Miller M.L."/>
            <person name="Jensen L.J."/>
            <person name="Gnad F."/>
            <person name="Cox J."/>
            <person name="Jensen T.S."/>
            <person name="Nigg E.A."/>
            <person name="Brunak S."/>
            <person name="Mann M."/>
        </authorList>
    </citation>
    <scope>ACETYLATION [LARGE SCALE ANALYSIS] AT ALA-2</scope>
    <scope>CLEAVAGE OF INITIATOR METHIONINE [LARGE SCALE ANALYSIS]</scope>
    <scope>IDENTIFICATION BY MASS SPECTROMETRY [LARGE SCALE ANALYSIS]</scope>
    <source>
        <tissue>Cervix carcinoma</tissue>
    </source>
</reference>
<reference key="6">
    <citation type="journal article" date="2011" name="BMC Syst. Biol.">
        <title>Initial characterization of the human central proteome.</title>
        <authorList>
            <person name="Burkard T.R."/>
            <person name="Planyavsky M."/>
            <person name="Kaupe I."/>
            <person name="Breitwieser F.P."/>
            <person name="Buerckstuemmer T."/>
            <person name="Bennett K.L."/>
            <person name="Superti-Furga G."/>
            <person name="Colinge J."/>
        </authorList>
    </citation>
    <scope>IDENTIFICATION BY MASS SPECTROMETRY [LARGE SCALE ANALYSIS]</scope>
</reference>
<reference key="7">
    <citation type="journal article" date="2011" name="Sci. Signal.">
        <title>System-wide temporal characterization of the proteome and phosphoproteome of human embryonic stem cell differentiation.</title>
        <authorList>
            <person name="Rigbolt K.T."/>
            <person name="Prokhorova T.A."/>
            <person name="Akimov V."/>
            <person name="Henningsen J."/>
            <person name="Johansen P.T."/>
            <person name="Kratchmarova I."/>
            <person name="Kassem M."/>
            <person name="Mann M."/>
            <person name="Olsen J.V."/>
            <person name="Blagoev B."/>
        </authorList>
    </citation>
    <scope>ACETYLATION [LARGE SCALE ANALYSIS] AT ALA-2</scope>
    <scope>CLEAVAGE OF INITIATOR METHIONINE [LARGE SCALE ANALYSIS]</scope>
    <scope>IDENTIFICATION BY MASS SPECTROMETRY [LARGE SCALE ANALYSIS]</scope>
</reference>
<reference key="8">
    <citation type="journal article" date="2013" name="J. Proteome Res.">
        <title>Toward a comprehensive characterization of a human cancer cell phosphoproteome.</title>
        <authorList>
            <person name="Zhou H."/>
            <person name="Di Palma S."/>
            <person name="Preisinger C."/>
            <person name="Peng M."/>
            <person name="Polat A.N."/>
            <person name="Heck A.J."/>
            <person name="Mohammed S."/>
        </authorList>
    </citation>
    <scope>PHOSPHORYLATION [LARGE SCALE ANALYSIS] AT SER-182</scope>
    <scope>IDENTIFICATION BY MASS SPECTROMETRY [LARGE SCALE ANALYSIS]</scope>
    <source>
        <tissue>Erythroleukemia</tissue>
    </source>
</reference>
<reference key="9">
    <citation type="journal article" date="2014" name="Am. J. Hum. Genet.">
        <title>Mutations in PURA cause profound neonatal hypotonia, seizures, and encephalopathy in 5q31.3 microdeletion syndrome.</title>
        <authorList>
            <person name="Lalani S.R."/>
            <person name="Zhang J."/>
            <person name="Schaaf C.P."/>
            <person name="Brown C.W."/>
            <person name="Magoulas P."/>
            <person name="Tsai A.C."/>
            <person name="El-Gharbawy A."/>
            <person name="Wierenga K.J."/>
            <person name="Bartholomew D."/>
            <person name="Fong C.T."/>
            <person name="Barbaro-Dieber T."/>
            <person name="Kukolich M.K."/>
            <person name="Burrage L.C."/>
            <person name="Austin E."/>
            <person name="Keller K."/>
            <person name="Pastore M."/>
            <person name="Fernandez F."/>
            <person name="Lotze T."/>
            <person name="Wilfong A."/>
            <person name="Purcarin G."/>
            <person name="Zhu W."/>
            <person name="Craigen W.J."/>
            <person name="McGuire M."/>
            <person name="Jain M."/>
            <person name="Cooney E."/>
            <person name="Azamian M."/>
            <person name="Bainbridge M.N."/>
            <person name="Muzny D.M."/>
            <person name="Boerwinkle E."/>
            <person name="Person R.E."/>
            <person name="Niu Z."/>
            <person name="Eng C.M."/>
            <person name="Lupski J.R."/>
            <person name="Gibbs R.A."/>
            <person name="Beaudet A.L."/>
            <person name="Yang Y."/>
            <person name="Wang M.C."/>
            <person name="Xia F."/>
        </authorList>
    </citation>
    <scope>INVOLVEMENT IN NEDRIHF</scope>
    <scope>VARIANTS NEDRIHF 88-ILE-ALA-89 DELINS THR; PRO-89; GLU-97; PRO-100; LYS-157; PRO-199 AND PHE-271 DEL</scope>
</reference>
<reference key="10">
    <citation type="journal article" date="2014" name="J. Proteomics">
        <title>An enzyme assisted RP-RPLC approach for in-depth analysis of human liver phosphoproteome.</title>
        <authorList>
            <person name="Bian Y."/>
            <person name="Song C."/>
            <person name="Cheng K."/>
            <person name="Dong M."/>
            <person name="Wang F."/>
            <person name="Huang J."/>
            <person name="Sun D."/>
            <person name="Wang L."/>
            <person name="Ye M."/>
            <person name="Zou H."/>
        </authorList>
    </citation>
    <scope>IDENTIFICATION BY MASS SPECTROMETRY [LARGE SCALE ANALYSIS]</scope>
    <source>
        <tissue>Liver</tissue>
    </source>
</reference>
<reference key="11">
    <citation type="journal article" date="2014" name="J. Med. Genet.">
        <title>Whole exome sequencing in family trios reveals de novo mutations in PURA as a cause of severe neurodevelopmental delay and learning disability.</title>
        <authorList>
            <consortium name="DDD study"/>
            <person name="Hunt D."/>
            <person name="Leventer R.J."/>
            <person name="Simons C."/>
            <person name="Taft R."/>
            <person name="Swoboda K.J."/>
            <person name="Gawne-Cain M."/>
            <person name="Magee A.C."/>
            <person name="Turnpenny P.D."/>
            <person name="Baralle D."/>
        </authorList>
    </citation>
    <scope>VARIANTS NEDRIHF PHE-206 AND PHE-233 DEL</scope>
</reference>
<evidence type="ECO:0000250" key="1">
    <source>
        <dbReference type="UniProtKB" id="P42669"/>
    </source>
</evidence>
<evidence type="ECO:0000256" key="2">
    <source>
        <dbReference type="SAM" id="MobiDB-lite"/>
    </source>
</evidence>
<evidence type="ECO:0000269" key="3">
    <source>
    </source>
</evidence>
<evidence type="ECO:0000269" key="4">
    <source>
    </source>
</evidence>
<evidence type="ECO:0000269" key="5">
    <source>
    </source>
</evidence>
<evidence type="ECO:0000269" key="6">
    <source>
    </source>
</evidence>
<evidence type="ECO:0000305" key="7"/>
<evidence type="ECO:0000305" key="8">
    <source>
    </source>
</evidence>
<evidence type="ECO:0007744" key="9">
    <source>
    </source>
</evidence>
<evidence type="ECO:0007744" key="10">
    <source>
    </source>
</evidence>
<evidence type="ECO:0007744" key="11">
    <source>
    </source>
</evidence>
<evidence type="ECO:0007829" key="12">
    <source>
        <dbReference type="PDB" id="8CHT"/>
    </source>
</evidence>
<evidence type="ECO:0007829" key="13">
    <source>
        <dbReference type="PDB" id="8CHW"/>
    </source>
</evidence>
<sequence length="322" mass="34911">MADRDSGSEQGGAALGSGGSLGHPGSGSGSGGGGGGGGGGGGSGGGGGGAPGGLQHETQELASKRVDIQNKRFYLDVKQNAKGRFLKIAEVGAGGNKSRLTLSMSVAVEFRDYLGDFIEHYAQLGPSQPPDLAQAQDEPRRALKSEFLVRENRKYYMDLKENQRGRFLRIRQTVNRGPGLGSTQGQTIALPAQGLIEFRDALAKLIDDYGVEEEPAELPEGTSLTVDNKRFFFDVGSNKYGVFMRVSEVKPTYRNSITVPYKVWAKFGHTFCKYSEEMKKIQEKQREKRAACEQLHQQQQQQQEETAAATLLLQGEEEGEED</sequence>
<comment type="function">
    <text evidence="3 4">This is a probable transcription activator that specifically binds the purine-rich single strand of the PUR element located upstream of the MYC gene (PubMed:1448097, PubMed:20976240). May play a role in the initiation of DNA replication and in recombination.</text>
</comment>
<comment type="subunit">
    <text evidence="1">Homodimer, heterodimer with PURB and heterotrimer with PURB and YBX1/Y-box protein 1. Interacts with FMR1; this interaction occurs in association with polyribosome.</text>
</comment>
<comment type="interaction">
    <interactant intactId="EBI-1045860">
        <id>Q00577</id>
    </interactant>
    <interactant intactId="EBI-491274">
        <id>P06400</id>
        <label>RB1</label>
    </interactant>
    <organismsDiffer>false</organismsDiffer>
    <experiments>6</experiments>
</comment>
<comment type="interaction">
    <interactant intactId="EBI-1045860">
        <id>Q00577</id>
    </interactant>
    <interactant intactId="EBI-617698">
        <id>P03070</id>
    </interactant>
    <organismsDiffer>true</organismsDiffer>
    <experiments>2</experiments>
</comment>
<comment type="interaction">
    <interactant intactId="EBI-1045860">
        <id>Q00577</id>
    </interactant>
    <interactant intactId="EBI-8658901">
        <id>P03072</id>
    </interactant>
    <organismsDiffer>true</organismsDiffer>
    <experiments>4</experiments>
</comment>
<comment type="subcellular location">
    <subcellularLocation>
        <location>Nucleus</location>
    </subcellularLocation>
</comment>
<comment type="disease" evidence="5 6">
    <disease id="DI-04309">
        <name>Neurodevelopmental disorder with neonatal respiratory insufficiency, hypotonia, and feeding difficulties</name>
        <acronym>NEDRIHF</acronym>
        <description>An autosomal dominant disorder characterized by severe neonatal hypotonia, respiratory and feeding difficulties, encephalopathy, and severe developmental delay. Additional common features may include seizures, exaggerated startle reflex, abnormal movements, and dysmorphic facial features.</description>
        <dbReference type="MIM" id="616158"/>
    </disease>
    <text>The disease is caused by variants affecting the gene represented in this entry.</text>
</comment>
<comment type="similarity">
    <text evidence="7">Belongs to the PUR DNA-binding protein family.</text>
</comment>
<dbReference type="EMBL" id="M96684">
    <property type="protein sequence ID" value="AAA60229.1"/>
    <property type="molecule type" value="mRNA"/>
</dbReference>
<dbReference type="EMBL" id="U02098">
    <property type="status" value="NOT_ANNOTATED_CDS"/>
    <property type="molecule type" value="mRNA"/>
</dbReference>
<dbReference type="CCDS" id="CCDS4220.1"/>
<dbReference type="PIR" id="A45036">
    <property type="entry name" value="A45036"/>
</dbReference>
<dbReference type="RefSeq" id="NP_005850.1">
    <property type="nucleotide sequence ID" value="NM_005859.5"/>
</dbReference>
<dbReference type="PDB" id="8CHT">
    <property type="method" value="X-ray"/>
    <property type="resolution" value="1.95 A"/>
    <property type="chains" value="A/B/C/D=57-212"/>
</dbReference>
<dbReference type="PDB" id="8CHU">
    <property type="method" value="X-ray"/>
    <property type="resolution" value="2.45 A"/>
    <property type="chains" value="A/B=57-212"/>
</dbReference>
<dbReference type="PDB" id="8CHV">
    <property type="method" value="X-ray"/>
    <property type="resolution" value="2.15 A"/>
    <property type="chains" value="A/B/C/D=57-212"/>
</dbReference>
<dbReference type="PDB" id="8CHW">
    <property type="method" value="X-ray"/>
    <property type="resolution" value="1.70 A"/>
    <property type="chains" value="A/B=216-280"/>
</dbReference>
<dbReference type="PDBsum" id="8CHT"/>
<dbReference type="PDBsum" id="8CHU"/>
<dbReference type="PDBsum" id="8CHV"/>
<dbReference type="PDBsum" id="8CHW"/>
<dbReference type="SMR" id="Q00577"/>
<dbReference type="BioGRID" id="111772">
    <property type="interactions" value="470"/>
</dbReference>
<dbReference type="FunCoup" id="Q00577">
    <property type="interactions" value="2283"/>
</dbReference>
<dbReference type="IntAct" id="Q00577">
    <property type="interactions" value="111"/>
</dbReference>
<dbReference type="MINT" id="Q00577"/>
<dbReference type="STRING" id="9606.ENSP00000332706"/>
<dbReference type="GlyGen" id="Q00577">
    <property type="glycosylation" value="1 site, 1 O-linked glycan (1 site)"/>
</dbReference>
<dbReference type="iPTMnet" id="Q00577"/>
<dbReference type="PhosphoSitePlus" id="Q00577"/>
<dbReference type="SwissPalm" id="Q00577"/>
<dbReference type="BioMuta" id="PURA"/>
<dbReference type="DMDM" id="1346918"/>
<dbReference type="jPOST" id="Q00577"/>
<dbReference type="MassIVE" id="Q00577"/>
<dbReference type="PaxDb" id="9606-ENSP00000332706"/>
<dbReference type="PeptideAtlas" id="Q00577"/>
<dbReference type="ProteomicsDB" id="57857"/>
<dbReference type="Pumba" id="Q00577"/>
<dbReference type="Antibodypedia" id="26834">
    <property type="antibodies" value="265 antibodies from 28 providers"/>
</dbReference>
<dbReference type="DNASU" id="5813"/>
<dbReference type="Ensembl" id="ENST00000331327.5">
    <property type="protein sequence ID" value="ENSP00000332706.3"/>
    <property type="gene ID" value="ENSG00000185129.8"/>
</dbReference>
<dbReference type="Ensembl" id="ENST00000651386.1">
    <property type="protein sequence ID" value="ENSP00000499133.1"/>
    <property type="gene ID" value="ENSG00000185129.8"/>
</dbReference>
<dbReference type="GeneID" id="5813"/>
<dbReference type="KEGG" id="hsa:5813"/>
<dbReference type="MANE-Select" id="ENST00000331327.5">
    <property type="protein sequence ID" value="ENSP00000332706.3"/>
    <property type="RefSeq nucleotide sequence ID" value="NM_005859.5"/>
    <property type="RefSeq protein sequence ID" value="NP_005850.1"/>
</dbReference>
<dbReference type="UCSC" id="uc003lfa.4">
    <property type="organism name" value="human"/>
</dbReference>
<dbReference type="AGR" id="HGNC:9701"/>
<dbReference type="CTD" id="5813"/>
<dbReference type="DisGeNET" id="5813"/>
<dbReference type="GeneCards" id="PURA"/>
<dbReference type="GeneReviews" id="PURA"/>
<dbReference type="HGNC" id="HGNC:9701">
    <property type="gene designation" value="PURA"/>
</dbReference>
<dbReference type="HPA" id="ENSG00000185129">
    <property type="expression patterns" value="Low tissue specificity"/>
</dbReference>
<dbReference type="MalaCards" id="PURA"/>
<dbReference type="MIM" id="600473">
    <property type="type" value="gene"/>
</dbReference>
<dbReference type="MIM" id="616158">
    <property type="type" value="phenotype"/>
</dbReference>
<dbReference type="neXtProt" id="NX_Q00577"/>
<dbReference type="OpenTargets" id="ENSG00000185129"/>
<dbReference type="Orphanet" id="438216">
    <property type="disease" value="PURA-related severe neonatal hypotonia-seizures-encephalopathy syndrome due to a point mutation"/>
</dbReference>
<dbReference type="Orphanet" id="314655">
    <property type="disease" value="Severe neonatal hypotonia-seizures-encephalopathy syndrome due to 5q31.3 microdeletion"/>
</dbReference>
<dbReference type="PharmGKB" id="PA34045"/>
<dbReference type="VEuPathDB" id="HostDB:ENSG00000185129"/>
<dbReference type="eggNOG" id="KOG3074">
    <property type="taxonomic scope" value="Eukaryota"/>
</dbReference>
<dbReference type="GeneTree" id="ENSGT00950000183162"/>
<dbReference type="HOGENOM" id="CLU_057873_1_1_1"/>
<dbReference type="InParanoid" id="Q00577"/>
<dbReference type="OMA" id="WAKFGST"/>
<dbReference type="OrthoDB" id="523901at2759"/>
<dbReference type="PAN-GO" id="Q00577">
    <property type="GO annotations" value="5 GO annotations based on evolutionary models"/>
</dbReference>
<dbReference type="PhylomeDB" id="Q00577"/>
<dbReference type="TreeFam" id="TF313701"/>
<dbReference type="PathwayCommons" id="Q00577"/>
<dbReference type="SignaLink" id="Q00577"/>
<dbReference type="SIGNOR" id="Q00577"/>
<dbReference type="BioGRID-ORCS" id="5813">
    <property type="hits" value="18 hits in 1165 CRISPR screens"/>
</dbReference>
<dbReference type="CD-CODE" id="232F8A39">
    <property type="entry name" value="P-body"/>
</dbReference>
<dbReference type="CD-CODE" id="DEE660B4">
    <property type="entry name" value="Stress granule"/>
</dbReference>
<dbReference type="CD-CODE" id="FB4E32DD">
    <property type="entry name" value="Presynaptic clusters and postsynaptic densities"/>
</dbReference>
<dbReference type="ChiTaRS" id="PURA">
    <property type="organism name" value="human"/>
</dbReference>
<dbReference type="GeneWiki" id="PURA"/>
<dbReference type="GenomeRNAi" id="5813"/>
<dbReference type="Pharos" id="Q00577">
    <property type="development level" value="Tbio"/>
</dbReference>
<dbReference type="PRO" id="PR:Q00577"/>
<dbReference type="Proteomes" id="UP000005640">
    <property type="component" value="Chromosome 5"/>
</dbReference>
<dbReference type="RNAct" id="Q00577">
    <property type="molecule type" value="protein"/>
</dbReference>
<dbReference type="Bgee" id="ENSG00000185129">
    <property type="expression patterns" value="Expressed in Brodmann (1909) area 23 and 211 other cell types or tissues"/>
</dbReference>
<dbReference type="ExpressionAtlas" id="Q00577">
    <property type="expression patterns" value="baseline and differential"/>
</dbReference>
<dbReference type="GO" id="GO:0000781">
    <property type="term" value="C:chromosome, telomeric region"/>
    <property type="evidence" value="ECO:0000305"/>
    <property type="project" value="UniProtKB"/>
</dbReference>
<dbReference type="GO" id="GO:0005737">
    <property type="term" value="C:cytoplasm"/>
    <property type="evidence" value="ECO:0007669"/>
    <property type="project" value="Ensembl"/>
</dbReference>
<dbReference type="GO" id="GO:0030425">
    <property type="term" value="C:dendrite"/>
    <property type="evidence" value="ECO:0007669"/>
    <property type="project" value="Ensembl"/>
</dbReference>
<dbReference type="GO" id="GO:0098978">
    <property type="term" value="C:glutamatergic synapse"/>
    <property type="evidence" value="ECO:0007669"/>
    <property type="project" value="Ensembl"/>
</dbReference>
<dbReference type="GO" id="GO:0043025">
    <property type="term" value="C:neuronal cell body"/>
    <property type="evidence" value="ECO:0007669"/>
    <property type="project" value="Ensembl"/>
</dbReference>
<dbReference type="GO" id="GO:0005634">
    <property type="term" value="C:nucleus"/>
    <property type="evidence" value="ECO:0000314"/>
    <property type="project" value="UniProtKB"/>
</dbReference>
<dbReference type="GO" id="GO:0098794">
    <property type="term" value="C:postsynapse"/>
    <property type="evidence" value="ECO:0007669"/>
    <property type="project" value="Ensembl"/>
</dbReference>
<dbReference type="GO" id="GO:0000981">
    <property type="term" value="F:DNA-binding transcription factor activity, RNA polymerase II-specific"/>
    <property type="evidence" value="ECO:0000318"/>
    <property type="project" value="GO_Central"/>
</dbReference>
<dbReference type="GO" id="GO:0140297">
    <property type="term" value="F:DNA-binding transcription factor binding"/>
    <property type="evidence" value="ECO:0000250"/>
    <property type="project" value="UniProtKB"/>
</dbReference>
<dbReference type="GO" id="GO:0001227">
    <property type="term" value="F:DNA-binding transcription repressor activity, RNA polymerase II-specific"/>
    <property type="evidence" value="ECO:0000250"/>
    <property type="project" value="BHF-UCL"/>
</dbReference>
<dbReference type="GO" id="GO:0003691">
    <property type="term" value="F:double-stranded telomeric DNA binding"/>
    <property type="evidence" value="ECO:0000314"/>
    <property type="project" value="UniProtKB"/>
</dbReference>
<dbReference type="GO" id="GO:0000900">
    <property type="term" value="F:mRNA regulatory element binding translation repressor activity"/>
    <property type="evidence" value="ECO:0000250"/>
    <property type="project" value="BHF-UCL"/>
</dbReference>
<dbReference type="GO" id="GO:0032422">
    <property type="term" value="F:purine-rich negative regulatory element binding"/>
    <property type="evidence" value="ECO:0000250"/>
    <property type="project" value="BHF-UCL"/>
</dbReference>
<dbReference type="GO" id="GO:0003723">
    <property type="term" value="F:RNA binding"/>
    <property type="evidence" value="ECO:0007005"/>
    <property type="project" value="UniProtKB"/>
</dbReference>
<dbReference type="GO" id="GO:0000977">
    <property type="term" value="F:RNA polymerase II transcription regulatory region sequence-specific DNA binding"/>
    <property type="evidence" value="ECO:0000318"/>
    <property type="project" value="GO_Central"/>
</dbReference>
<dbReference type="GO" id="GO:0003697">
    <property type="term" value="F:single-stranded DNA binding"/>
    <property type="evidence" value="ECO:0000250"/>
    <property type="project" value="UniProtKB"/>
</dbReference>
<dbReference type="GO" id="GO:0046332">
    <property type="term" value="F:SMAD binding"/>
    <property type="evidence" value="ECO:0007669"/>
    <property type="project" value="Ensembl"/>
</dbReference>
<dbReference type="GO" id="GO:0140416">
    <property type="term" value="F:transcription regulator inhibitor activity"/>
    <property type="evidence" value="ECO:0007669"/>
    <property type="project" value="Ensembl"/>
</dbReference>
<dbReference type="GO" id="GO:0098963">
    <property type="term" value="P:dendritic transport of messenger ribonucleoprotein complex"/>
    <property type="evidence" value="ECO:0007669"/>
    <property type="project" value="Ensembl"/>
</dbReference>
<dbReference type="GO" id="GO:0006270">
    <property type="term" value="P:DNA replication initiation"/>
    <property type="evidence" value="ECO:0000304"/>
    <property type="project" value="ProtInc"/>
</dbReference>
<dbReference type="GO" id="GO:0050673">
    <property type="term" value="P:epithelial cell proliferation"/>
    <property type="evidence" value="ECO:0007669"/>
    <property type="project" value="Ensembl"/>
</dbReference>
<dbReference type="GO" id="GO:0046651">
    <property type="term" value="P:lymphocyte proliferation"/>
    <property type="evidence" value="ECO:0007669"/>
    <property type="project" value="Ensembl"/>
</dbReference>
<dbReference type="GO" id="GO:0000122">
    <property type="term" value="P:negative regulation of transcription by RNA polymerase II"/>
    <property type="evidence" value="ECO:0000314"/>
    <property type="project" value="UniProtKB"/>
</dbReference>
<dbReference type="GO" id="GO:0007399">
    <property type="term" value="P:nervous system development"/>
    <property type="evidence" value="ECO:0007669"/>
    <property type="project" value="Ensembl"/>
</dbReference>
<dbReference type="GO" id="GO:0008284">
    <property type="term" value="P:positive regulation of cell population proliferation"/>
    <property type="evidence" value="ECO:0007669"/>
    <property type="project" value="Ensembl"/>
</dbReference>
<dbReference type="GO" id="GO:0006357">
    <property type="term" value="P:regulation of transcription by RNA polymerase II"/>
    <property type="evidence" value="ECO:0000318"/>
    <property type="project" value="GO_Central"/>
</dbReference>
<dbReference type="FunFam" id="3.10.450.700:FF:000001">
    <property type="entry name" value="Purine-rich element binding protein A"/>
    <property type="match status" value="1"/>
</dbReference>
<dbReference type="FunFam" id="3.30.2450.30:FF:000001">
    <property type="entry name" value="Purine-rich element binding protein A"/>
    <property type="match status" value="1"/>
</dbReference>
<dbReference type="Gene3D" id="3.10.450.700">
    <property type="match status" value="1"/>
</dbReference>
<dbReference type="Gene3D" id="3.30.2450.30">
    <property type="match status" value="1"/>
</dbReference>
<dbReference type="InterPro" id="IPR006628">
    <property type="entry name" value="PUR-bd_fam"/>
</dbReference>
<dbReference type="PANTHER" id="PTHR12611">
    <property type="entry name" value="PUR-TRANSCRIPTIONAL ACTIVATOR"/>
    <property type="match status" value="1"/>
</dbReference>
<dbReference type="PANTHER" id="PTHR12611:SF2">
    <property type="entry name" value="TRANSCRIPTIONAL ACTIVATOR PROTEIN PUR-ALPHA"/>
    <property type="match status" value="1"/>
</dbReference>
<dbReference type="Pfam" id="PF04845">
    <property type="entry name" value="PurA"/>
    <property type="match status" value="1"/>
</dbReference>
<dbReference type="SMART" id="SM00712">
    <property type="entry name" value="PUR"/>
    <property type="match status" value="3"/>
</dbReference>